<keyword id="KW-0067">ATP-binding</keyword>
<keyword id="KW-0143">Chaperone</keyword>
<keyword id="KW-0547">Nucleotide-binding</keyword>
<keyword id="KW-0597">Phosphoprotein</keyword>
<keyword id="KW-0346">Stress response</keyword>
<gene>
    <name evidence="1" type="primary">dnaK</name>
    <name type="ordered locus">Spy49_1374c</name>
</gene>
<protein>
    <recommendedName>
        <fullName evidence="1">Chaperone protein DnaK</fullName>
    </recommendedName>
    <alternativeName>
        <fullName evidence="1">HSP70</fullName>
    </alternativeName>
    <alternativeName>
        <fullName evidence="1">Heat shock 70 kDa protein</fullName>
    </alternativeName>
    <alternativeName>
        <fullName evidence="1">Heat shock protein 70</fullName>
    </alternativeName>
</protein>
<reference key="1">
    <citation type="journal article" date="2008" name="J. Bacteriol.">
        <title>Genome sequence of a nephritogenic and highly transformable M49 strain of Streptococcus pyogenes.</title>
        <authorList>
            <person name="McShan W.M."/>
            <person name="Ferretti J.J."/>
            <person name="Karasawa T."/>
            <person name="Suvorov A.N."/>
            <person name="Lin S."/>
            <person name="Qin B."/>
            <person name="Jia H."/>
            <person name="Kenton S."/>
            <person name="Najar F."/>
            <person name="Wu H."/>
            <person name="Scott J."/>
            <person name="Roe B.A."/>
            <person name="Savic D.J."/>
        </authorList>
    </citation>
    <scope>NUCLEOTIDE SEQUENCE [LARGE SCALE GENOMIC DNA]</scope>
    <source>
        <strain>NZ131</strain>
    </source>
</reference>
<sequence>MSKIIGIDLGTTNSAVAVLEGTESKIIANPEGNRTTPSVVSFKNGEIIVGDAAKRQAVTNPETVISIKSKMGTSEKVSANGKEYTPQEISAMILQYLKGYAEDYLGEKVEKAVITVPAYFNDAQRQATKDAGKIAGLEVERIVNEPTAAALAYGMDKTDKDEKILVFDLGGGTFDVSILELGDGVFDVLATAGDNKLGGDDFDQKIIDFLVEEFKKENGIDLSQDKMALQRLKDAAEKAKKDLSGVTQTQISLPFITAGSAGPLHLEMSLSRAKFDDLTRDLVERTKTPVRQALSDAGLSLSEIDEVILVGGSTRIPAVVEAVKAETGKEPNKSVNPDEVVAMGAAIQGGVITGDVKDVVLLDVTPLSLGIETMGGVFTKLIDRNTTIPTSKSQVFSTAADNQPAVDIHVLQGERPMAADNKTLGRFQLTDIPAAPRGIPQIEVTFDIDKNGIVSVKAKDLGTQKEQHIVIKSNDGLSEEEIDRMMKDAEANAEADAKRKEEVDLKNEVDQAIFATEKTIKETEGKGFDTERDAAQSALDELKAAQESGNLDDMKAKLEALNEKAQALAVKMYEQAAAAQQAAQGAEGAQANDSANNDDVVDGEFTEK</sequence>
<dbReference type="EMBL" id="CP000829">
    <property type="protein sequence ID" value="ACI61652.1"/>
    <property type="molecule type" value="Genomic_DNA"/>
</dbReference>
<dbReference type="SMR" id="B5XHZ0"/>
<dbReference type="KEGG" id="soz:Spy49_1374c"/>
<dbReference type="HOGENOM" id="CLU_005965_2_4_9"/>
<dbReference type="Proteomes" id="UP000001039">
    <property type="component" value="Chromosome"/>
</dbReference>
<dbReference type="GO" id="GO:0005524">
    <property type="term" value="F:ATP binding"/>
    <property type="evidence" value="ECO:0007669"/>
    <property type="project" value="UniProtKB-UniRule"/>
</dbReference>
<dbReference type="GO" id="GO:0140662">
    <property type="term" value="F:ATP-dependent protein folding chaperone"/>
    <property type="evidence" value="ECO:0007669"/>
    <property type="project" value="InterPro"/>
</dbReference>
<dbReference type="GO" id="GO:0051082">
    <property type="term" value="F:unfolded protein binding"/>
    <property type="evidence" value="ECO:0007669"/>
    <property type="project" value="InterPro"/>
</dbReference>
<dbReference type="CDD" id="cd10234">
    <property type="entry name" value="ASKHA_NBD_HSP70_DnaK-like"/>
    <property type="match status" value="1"/>
</dbReference>
<dbReference type="FunFam" id="2.60.34.10:FF:000014">
    <property type="entry name" value="Chaperone protein DnaK HSP70"/>
    <property type="match status" value="1"/>
</dbReference>
<dbReference type="FunFam" id="3.30.420.40:FF:000071">
    <property type="entry name" value="Molecular chaperone DnaK"/>
    <property type="match status" value="1"/>
</dbReference>
<dbReference type="FunFam" id="3.90.640.10:FF:000003">
    <property type="entry name" value="Molecular chaperone DnaK"/>
    <property type="match status" value="1"/>
</dbReference>
<dbReference type="Gene3D" id="1.20.1270.10">
    <property type="match status" value="1"/>
</dbReference>
<dbReference type="Gene3D" id="3.30.420.40">
    <property type="match status" value="2"/>
</dbReference>
<dbReference type="Gene3D" id="3.90.640.10">
    <property type="entry name" value="Actin, Chain A, domain 4"/>
    <property type="match status" value="1"/>
</dbReference>
<dbReference type="Gene3D" id="2.60.34.10">
    <property type="entry name" value="Substrate Binding Domain Of DNAk, Chain A, domain 1"/>
    <property type="match status" value="1"/>
</dbReference>
<dbReference type="HAMAP" id="MF_00332">
    <property type="entry name" value="DnaK"/>
    <property type="match status" value="1"/>
</dbReference>
<dbReference type="InterPro" id="IPR043129">
    <property type="entry name" value="ATPase_NBD"/>
</dbReference>
<dbReference type="InterPro" id="IPR012725">
    <property type="entry name" value="Chaperone_DnaK"/>
</dbReference>
<dbReference type="InterPro" id="IPR018181">
    <property type="entry name" value="Heat_shock_70_CS"/>
</dbReference>
<dbReference type="InterPro" id="IPR029048">
    <property type="entry name" value="HSP70_C_sf"/>
</dbReference>
<dbReference type="InterPro" id="IPR029047">
    <property type="entry name" value="HSP70_peptide-bd_sf"/>
</dbReference>
<dbReference type="InterPro" id="IPR013126">
    <property type="entry name" value="Hsp_70_fam"/>
</dbReference>
<dbReference type="NCBIfam" id="NF001413">
    <property type="entry name" value="PRK00290.1"/>
    <property type="match status" value="1"/>
</dbReference>
<dbReference type="NCBIfam" id="TIGR02350">
    <property type="entry name" value="prok_dnaK"/>
    <property type="match status" value="1"/>
</dbReference>
<dbReference type="PANTHER" id="PTHR19375">
    <property type="entry name" value="HEAT SHOCK PROTEIN 70KDA"/>
    <property type="match status" value="1"/>
</dbReference>
<dbReference type="Pfam" id="PF00012">
    <property type="entry name" value="HSP70"/>
    <property type="match status" value="1"/>
</dbReference>
<dbReference type="PRINTS" id="PR00301">
    <property type="entry name" value="HEATSHOCK70"/>
</dbReference>
<dbReference type="SUPFAM" id="SSF53067">
    <property type="entry name" value="Actin-like ATPase domain"/>
    <property type="match status" value="2"/>
</dbReference>
<dbReference type="SUPFAM" id="SSF100934">
    <property type="entry name" value="Heat shock protein 70kD (HSP70), C-terminal subdomain"/>
    <property type="match status" value="1"/>
</dbReference>
<dbReference type="SUPFAM" id="SSF100920">
    <property type="entry name" value="Heat shock protein 70kD (HSP70), peptide-binding domain"/>
    <property type="match status" value="1"/>
</dbReference>
<dbReference type="PROSITE" id="PS00297">
    <property type="entry name" value="HSP70_1"/>
    <property type="match status" value="1"/>
</dbReference>
<dbReference type="PROSITE" id="PS00329">
    <property type="entry name" value="HSP70_2"/>
    <property type="match status" value="1"/>
</dbReference>
<dbReference type="PROSITE" id="PS01036">
    <property type="entry name" value="HSP70_3"/>
    <property type="match status" value="1"/>
</dbReference>
<organism>
    <name type="scientific">Streptococcus pyogenes serotype M49 (strain NZ131)</name>
    <dbReference type="NCBI Taxonomy" id="471876"/>
    <lineage>
        <taxon>Bacteria</taxon>
        <taxon>Bacillati</taxon>
        <taxon>Bacillota</taxon>
        <taxon>Bacilli</taxon>
        <taxon>Lactobacillales</taxon>
        <taxon>Streptococcaceae</taxon>
        <taxon>Streptococcus</taxon>
    </lineage>
</organism>
<accession>B5XHZ0</accession>
<comment type="function">
    <text evidence="1">Acts as a chaperone.</text>
</comment>
<comment type="induction">
    <text evidence="1">By stress conditions e.g. heat shock.</text>
</comment>
<comment type="similarity">
    <text evidence="1">Belongs to the heat shock protein 70 family.</text>
</comment>
<evidence type="ECO:0000255" key="1">
    <source>
        <dbReference type="HAMAP-Rule" id="MF_00332"/>
    </source>
</evidence>
<evidence type="ECO:0000256" key="2">
    <source>
        <dbReference type="SAM" id="MobiDB-lite"/>
    </source>
</evidence>
<name>DNAK_STRPZ</name>
<proteinExistence type="inferred from homology"/>
<feature type="chain" id="PRO_1000119765" description="Chaperone protein DnaK">
    <location>
        <begin position="1"/>
        <end position="608"/>
    </location>
</feature>
<feature type="region of interest" description="Disordered" evidence="2">
    <location>
        <begin position="578"/>
        <end position="608"/>
    </location>
</feature>
<feature type="compositionally biased region" description="Low complexity" evidence="2">
    <location>
        <begin position="578"/>
        <end position="598"/>
    </location>
</feature>
<feature type="compositionally biased region" description="Acidic residues" evidence="2">
    <location>
        <begin position="599"/>
        <end position="608"/>
    </location>
</feature>
<feature type="modified residue" description="Phosphothreonine; by autocatalysis" evidence="1">
    <location>
        <position position="173"/>
    </location>
</feature>